<proteinExistence type="inferred from homology"/>
<evidence type="ECO:0000250" key="1"/>
<evidence type="ECO:0000305" key="2"/>
<feature type="chain" id="PRO_0000152646" description="Lysine--tRNA ligase">
    <location>
        <begin position="1"/>
        <end position="490"/>
    </location>
</feature>
<feature type="binding site" evidence="1">
    <location>
        <position position="400"/>
    </location>
    <ligand>
        <name>Mg(2+)</name>
        <dbReference type="ChEBI" id="CHEBI:18420"/>
        <label>1</label>
    </ligand>
</feature>
<feature type="binding site" evidence="1">
    <location>
        <position position="407"/>
    </location>
    <ligand>
        <name>Mg(2+)</name>
        <dbReference type="ChEBI" id="CHEBI:18420"/>
        <label>1</label>
    </ligand>
</feature>
<feature type="binding site" evidence="1">
    <location>
        <position position="407"/>
    </location>
    <ligand>
        <name>Mg(2+)</name>
        <dbReference type="ChEBI" id="CHEBI:18420"/>
        <label>2</label>
    </ligand>
</feature>
<protein>
    <recommendedName>
        <fullName>Lysine--tRNA ligase</fullName>
        <ecNumber>6.1.1.6</ecNumber>
    </recommendedName>
    <alternativeName>
        <fullName>Lysyl-tRNA synthetase</fullName>
        <shortName>LysRS</shortName>
    </alternativeName>
</protein>
<organism>
    <name type="scientific">Mycoplasma genitalium (strain ATCC 33530 / DSM 19775 / NCTC 10195 / G37)</name>
    <name type="common">Mycoplasmoides genitalium</name>
    <dbReference type="NCBI Taxonomy" id="243273"/>
    <lineage>
        <taxon>Bacteria</taxon>
        <taxon>Bacillati</taxon>
        <taxon>Mycoplasmatota</taxon>
        <taxon>Mycoplasmoidales</taxon>
        <taxon>Mycoplasmoidaceae</taxon>
        <taxon>Mycoplasmoides</taxon>
    </lineage>
</organism>
<name>SYK_MYCGE</name>
<accession>P47382</accession>
<sequence>MSDRLNDQAQHRLQKLLRLKQTNNDPYLVTKTSLTHSSKSFQVEFEKCSEEELKKKATVSLAGRIIAIRQTFLIIQDFDGQVQLYINKKIHPKLFDYFNEFVDIGDQIVVSGKPMLTKTKVLTLAVEEMKIIAKCLLVPPEKWHGLTDIETRARKRFLDLTYNLAMRDVFLKRTKIIKSIRSFLDQNGFIEVETPTLQAVLGGANAKPFKTHYNALKADFYLRIANEIALKKLIIGGFNKVYEMGKMFRNEGVDTTHNPEFTSIEIYQAYADFEVMLVLVEKLIQSLCESLNQFSFNWNNKTINLKTPFHKITMVELIKKVTGIDFNSVKDDQSAILLAEKHHVKLAKHQQNKQHIINLFFEQFCEQTLIEPTFVTHYPKAVSPLAKQDPSNPEFTQRFELFINGKEIANAYSELNDPLEQRKRFEQQLEEKQLGNDETSELDESFLEALSFGMVNTAGLGIGIDRLVMLLCECNSIRDVVFFPQLREHK</sequence>
<reference key="1">
    <citation type="journal article" date="1995" name="Science">
        <title>The minimal gene complement of Mycoplasma genitalium.</title>
        <authorList>
            <person name="Fraser C.M."/>
            <person name="Gocayne J.D."/>
            <person name="White O."/>
            <person name="Adams M.D."/>
            <person name="Clayton R.A."/>
            <person name="Fleischmann R.D."/>
            <person name="Bult C.J."/>
            <person name="Kerlavage A.R."/>
            <person name="Sutton G.G."/>
            <person name="Kelley J.M."/>
            <person name="Fritchman J.L."/>
            <person name="Weidman J.F."/>
            <person name="Small K.V."/>
            <person name="Sandusky M."/>
            <person name="Fuhrmann J.L."/>
            <person name="Nguyen D.T."/>
            <person name="Utterback T.R."/>
            <person name="Saudek D.M."/>
            <person name="Phillips C.A."/>
            <person name="Merrick J.M."/>
            <person name="Tomb J.-F."/>
            <person name="Dougherty B.A."/>
            <person name="Bott K.F."/>
            <person name="Hu P.-C."/>
            <person name="Lucier T.S."/>
            <person name="Peterson S.N."/>
            <person name="Smith H.O."/>
            <person name="Hutchison C.A. III"/>
            <person name="Venter J.C."/>
        </authorList>
    </citation>
    <scope>NUCLEOTIDE SEQUENCE [LARGE SCALE GENOMIC DNA]</scope>
    <source>
        <strain>ATCC 33530 / DSM 19775 / NCTC 10195 / G37</strain>
    </source>
</reference>
<keyword id="KW-0030">Aminoacyl-tRNA synthetase</keyword>
<keyword id="KW-0067">ATP-binding</keyword>
<keyword id="KW-0963">Cytoplasm</keyword>
<keyword id="KW-0436">Ligase</keyword>
<keyword id="KW-0460">Magnesium</keyword>
<keyword id="KW-0479">Metal-binding</keyword>
<keyword id="KW-0547">Nucleotide-binding</keyword>
<keyword id="KW-0648">Protein biosynthesis</keyword>
<keyword id="KW-1185">Reference proteome</keyword>
<dbReference type="EC" id="6.1.1.6"/>
<dbReference type="EMBL" id="L43967">
    <property type="protein sequence ID" value="AAC71353.1"/>
    <property type="molecule type" value="Genomic_DNA"/>
</dbReference>
<dbReference type="PIR" id="A64215">
    <property type="entry name" value="A64215"/>
</dbReference>
<dbReference type="RefSeq" id="WP_009885692.1">
    <property type="nucleotide sequence ID" value="NC_000908.2"/>
</dbReference>
<dbReference type="SMR" id="P47382"/>
<dbReference type="FunCoup" id="P47382">
    <property type="interactions" value="214"/>
</dbReference>
<dbReference type="STRING" id="243273.MG_136"/>
<dbReference type="GeneID" id="88282261"/>
<dbReference type="KEGG" id="mge:MG_136"/>
<dbReference type="eggNOG" id="COG1190">
    <property type="taxonomic scope" value="Bacteria"/>
</dbReference>
<dbReference type="HOGENOM" id="CLU_008255_6_0_14"/>
<dbReference type="InParanoid" id="P47382"/>
<dbReference type="OrthoDB" id="9801152at2"/>
<dbReference type="BioCyc" id="MGEN243273:G1GJ2-150-MONOMER"/>
<dbReference type="Proteomes" id="UP000000807">
    <property type="component" value="Chromosome"/>
</dbReference>
<dbReference type="GO" id="GO:0005737">
    <property type="term" value="C:cytoplasm"/>
    <property type="evidence" value="ECO:0000318"/>
    <property type="project" value="GO_Central"/>
</dbReference>
<dbReference type="GO" id="GO:0005829">
    <property type="term" value="C:cytosol"/>
    <property type="evidence" value="ECO:0000318"/>
    <property type="project" value="GO_Central"/>
</dbReference>
<dbReference type="GO" id="GO:0005524">
    <property type="term" value="F:ATP binding"/>
    <property type="evidence" value="ECO:0007669"/>
    <property type="project" value="UniProtKB-UniRule"/>
</dbReference>
<dbReference type="GO" id="GO:0004824">
    <property type="term" value="F:lysine-tRNA ligase activity"/>
    <property type="evidence" value="ECO:0000318"/>
    <property type="project" value="GO_Central"/>
</dbReference>
<dbReference type="GO" id="GO:0000287">
    <property type="term" value="F:magnesium ion binding"/>
    <property type="evidence" value="ECO:0007669"/>
    <property type="project" value="UniProtKB-UniRule"/>
</dbReference>
<dbReference type="GO" id="GO:0000049">
    <property type="term" value="F:tRNA binding"/>
    <property type="evidence" value="ECO:0000318"/>
    <property type="project" value="GO_Central"/>
</dbReference>
<dbReference type="GO" id="GO:0006430">
    <property type="term" value="P:lysyl-tRNA aminoacylation"/>
    <property type="evidence" value="ECO:0000318"/>
    <property type="project" value="GO_Central"/>
</dbReference>
<dbReference type="CDD" id="cd00775">
    <property type="entry name" value="LysRS_core"/>
    <property type="match status" value="1"/>
</dbReference>
<dbReference type="CDD" id="cd04322">
    <property type="entry name" value="LysRS_N"/>
    <property type="match status" value="1"/>
</dbReference>
<dbReference type="FunFam" id="2.40.50.140:FF:000959">
    <property type="match status" value="1"/>
</dbReference>
<dbReference type="Gene3D" id="3.30.930.10">
    <property type="entry name" value="Bira Bifunctional Protein, Domain 2"/>
    <property type="match status" value="1"/>
</dbReference>
<dbReference type="Gene3D" id="2.40.50.140">
    <property type="entry name" value="Nucleic acid-binding proteins"/>
    <property type="match status" value="1"/>
</dbReference>
<dbReference type="HAMAP" id="MF_00252">
    <property type="entry name" value="Lys_tRNA_synth_class2"/>
    <property type="match status" value="1"/>
</dbReference>
<dbReference type="InterPro" id="IPR004364">
    <property type="entry name" value="Aa-tRNA-synt_II"/>
</dbReference>
<dbReference type="InterPro" id="IPR006195">
    <property type="entry name" value="aa-tRNA-synth_II"/>
</dbReference>
<dbReference type="InterPro" id="IPR045864">
    <property type="entry name" value="aa-tRNA-synth_II/BPL/LPL"/>
</dbReference>
<dbReference type="InterPro" id="IPR002313">
    <property type="entry name" value="Lys-tRNA-ligase_II"/>
</dbReference>
<dbReference type="InterPro" id="IPR044136">
    <property type="entry name" value="Lys-tRNA-ligase_II_N"/>
</dbReference>
<dbReference type="InterPro" id="IPR018149">
    <property type="entry name" value="Lys-tRNA-synth_II_C"/>
</dbReference>
<dbReference type="InterPro" id="IPR012340">
    <property type="entry name" value="NA-bd_OB-fold"/>
</dbReference>
<dbReference type="InterPro" id="IPR004365">
    <property type="entry name" value="NA-bd_OB_tRNA"/>
</dbReference>
<dbReference type="NCBIfam" id="TIGR00499">
    <property type="entry name" value="lysS_bact"/>
    <property type="match status" value="1"/>
</dbReference>
<dbReference type="NCBIfam" id="NF001756">
    <property type="entry name" value="PRK00484.1"/>
    <property type="match status" value="1"/>
</dbReference>
<dbReference type="PANTHER" id="PTHR42918:SF15">
    <property type="entry name" value="LYSINE--TRNA LIGASE, CHLOROPLASTIC_MITOCHONDRIAL"/>
    <property type="match status" value="1"/>
</dbReference>
<dbReference type="PANTHER" id="PTHR42918">
    <property type="entry name" value="LYSYL-TRNA SYNTHETASE"/>
    <property type="match status" value="1"/>
</dbReference>
<dbReference type="Pfam" id="PF00152">
    <property type="entry name" value="tRNA-synt_2"/>
    <property type="match status" value="1"/>
</dbReference>
<dbReference type="Pfam" id="PF01336">
    <property type="entry name" value="tRNA_anti-codon"/>
    <property type="match status" value="1"/>
</dbReference>
<dbReference type="PRINTS" id="PR00982">
    <property type="entry name" value="TRNASYNTHLYS"/>
</dbReference>
<dbReference type="SUPFAM" id="SSF55681">
    <property type="entry name" value="Class II aaRS and biotin synthetases"/>
    <property type="match status" value="1"/>
</dbReference>
<dbReference type="SUPFAM" id="SSF50249">
    <property type="entry name" value="Nucleic acid-binding proteins"/>
    <property type="match status" value="1"/>
</dbReference>
<dbReference type="PROSITE" id="PS50862">
    <property type="entry name" value="AA_TRNA_LIGASE_II"/>
    <property type="match status" value="1"/>
</dbReference>
<comment type="catalytic activity">
    <reaction>
        <text>tRNA(Lys) + L-lysine + ATP = L-lysyl-tRNA(Lys) + AMP + diphosphate</text>
        <dbReference type="Rhea" id="RHEA:20792"/>
        <dbReference type="Rhea" id="RHEA-COMP:9696"/>
        <dbReference type="Rhea" id="RHEA-COMP:9697"/>
        <dbReference type="ChEBI" id="CHEBI:30616"/>
        <dbReference type="ChEBI" id="CHEBI:32551"/>
        <dbReference type="ChEBI" id="CHEBI:33019"/>
        <dbReference type="ChEBI" id="CHEBI:78442"/>
        <dbReference type="ChEBI" id="CHEBI:78529"/>
        <dbReference type="ChEBI" id="CHEBI:456215"/>
        <dbReference type="EC" id="6.1.1.6"/>
    </reaction>
</comment>
<comment type="cofactor">
    <cofactor evidence="1">
        <name>Mg(2+)</name>
        <dbReference type="ChEBI" id="CHEBI:18420"/>
    </cofactor>
    <text evidence="1">Binds 3 Mg(2+) ions per subunit.</text>
</comment>
<comment type="subunit">
    <text evidence="1">Homodimer.</text>
</comment>
<comment type="subcellular location">
    <subcellularLocation>
        <location evidence="1">Cytoplasm</location>
    </subcellularLocation>
</comment>
<comment type="similarity">
    <text evidence="2">Belongs to the class-II aminoacyl-tRNA synthetase family.</text>
</comment>
<gene>
    <name type="primary">lysS</name>
    <name type="ordered locus">MG136</name>
</gene>